<feature type="chain" id="PRO_1000165927" description="Large ribosomal subunit protein uL24">
    <location>
        <begin position="1"/>
        <end position="111"/>
    </location>
</feature>
<accession>B8DW24</accession>
<dbReference type="EMBL" id="CP001213">
    <property type="protein sequence ID" value="ACL28675.1"/>
    <property type="molecule type" value="Genomic_DNA"/>
</dbReference>
<dbReference type="RefSeq" id="WP_004268591.1">
    <property type="nucleotide sequence ID" value="NC_011835.1"/>
</dbReference>
<dbReference type="SMR" id="B8DW24"/>
<dbReference type="STRING" id="442563.BLA_0373"/>
<dbReference type="GeneID" id="29696131"/>
<dbReference type="KEGG" id="bla:BLA_0373"/>
<dbReference type="HOGENOM" id="CLU_093315_2_0_11"/>
<dbReference type="Proteomes" id="UP000002456">
    <property type="component" value="Chromosome"/>
</dbReference>
<dbReference type="GO" id="GO:1990904">
    <property type="term" value="C:ribonucleoprotein complex"/>
    <property type="evidence" value="ECO:0007669"/>
    <property type="project" value="UniProtKB-KW"/>
</dbReference>
<dbReference type="GO" id="GO:0005840">
    <property type="term" value="C:ribosome"/>
    <property type="evidence" value="ECO:0007669"/>
    <property type="project" value="UniProtKB-KW"/>
</dbReference>
<dbReference type="GO" id="GO:0019843">
    <property type="term" value="F:rRNA binding"/>
    <property type="evidence" value="ECO:0007669"/>
    <property type="project" value="UniProtKB-UniRule"/>
</dbReference>
<dbReference type="GO" id="GO:0003735">
    <property type="term" value="F:structural constituent of ribosome"/>
    <property type="evidence" value="ECO:0007669"/>
    <property type="project" value="InterPro"/>
</dbReference>
<dbReference type="GO" id="GO:0006412">
    <property type="term" value="P:translation"/>
    <property type="evidence" value="ECO:0007669"/>
    <property type="project" value="UniProtKB-UniRule"/>
</dbReference>
<dbReference type="CDD" id="cd06089">
    <property type="entry name" value="KOW_RPL26"/>
    <property type="match status" value="1"/>
</dbReference>
<dbReference type="Gene3D" id="2.30.30.30">
    <property type="match status" value="1"/>
</dbReference>
<dbReference type="HAMAP" id="MF_01326_B">
    <property type="entry name" value="Ribosomal_uL24_B"/>
    <property type="match status" value="1"/>
</dbReference>
<dbReference type="InterPro" id="IPR005824">
    <property type="entry name" value="KOW"/>
</dbReference>
<dbReference type="InterPro" id="IPR014722">
    <property type="entry name" value="Rib_uL2_dom2"/>
</dbReference>
<dbReference type="InterPro" id="IPR003256">
    <property type="entry name" value="Ribosomal_uL24"/>
</dbReference>
<dbReference type="InterPro" id="IPR005825">
    <property type="entry name" value="Ribosomal_uL24_CS"/>
</dbReference>
<dbReference type="InterPro" id="IPR041988">
    <property type="entry name" value="Ribosomal_uL24_KOW"/>
</dbReference>
<dbReference type="InterPro" id="IPR008991">
    <property type="entry name" value="Translation_prot_SH3-like_sf"/>
</dbReference>
<dbReference type="NCBIfam" id="TIGR01079">
    <property type="entry name" value="rplX_bact"/>
    <property type="match status" value="1"/>
</dbReference>
<dbReference type="PANTHER" id="PTHR12903">
    <property type="entry name" value="MITOCHONDRIAL RIBOSOMAL PROTEIN L24"/>
    <property type="match status" value="1"/>
</dbReference>
<dbReference type="Pfam" id="PF00467">
    <property type="entry name" value="KOW"/>
    <property type="match status" value="1"/>
</dbReference>
<dbReference type="Pfam" id="PF17136">
    <property type="entry name" value="ribosomal_L24"/>
    <property type="match status" value="1"/>
</dbReference>
<dbReference type="SMART" id="SM00739">
    <property type="entry name" value="KOW"/>
    <property type="match status" value="1"/>
</dbReference>
<dbReference type="SUPFAM" id="SSF50104">
    <property type="entry name" value="Translation proteins SH3-like domain"/>
    <property type="match status" value="1"/>
</dbReference>
<dbReference type="PROSITE" id="PS01108">
    <property type="entry name" value="RIBOSOMAL_L24"/>
    <property type="match status" value="1"/>
</dbReference>
<proteinExistence type="inferred from homology"/>
<reference key="1">
    <citation type="journal article" date="2009" name="J. Bacteriol.">
        <title>Genome sequence of the probiotic bacterium Bifidobacterium animalis subsp. lactis AD011.</title>
        <authorList>
            <person name="Kim J.F."/>
            <person name="Jeong H."/>
            <person name="Yu D.S."/>
            <person name="Choi S.-H."/>
            <person name="Hur C.-G."/>
            <person name="Park M.-S."/>
            <person name="Yoon S.H."/>
            <person name="Kim D.-W."/>
            <person name="Ji G.E."/>
            <person name="Park H.-S."/>
            <person name="Oh T.K."/>
        </authorList>
    </citation>
    <scope>NUCLEOTIDE SEQUENCE [LARGE SCALE GENOMIC DNA]</scope>
    <source>
        <strain>AD011</strain>
    </source>
</reference>
<sequence length="111" mass="12198">MVAKIKSGDLVKVIRGKDRGKEGTVKRVLKDDRLIVEGVQIVKKHVRATQQGQQAGIVSVEAPIHRSNVMVIDPETKQPTRVGVVIKEEARDGKVKTVRVRVAKKSGKELA</sequence>
<comment type="function">
    <text evidence="1">One of two assembly initiator proteins, it binds directly to the 5'-end of the 23S rRNA, where it nucleates assembly of the 50S subunit.</text>
</comment>
<comment type="function">
    <text evidence="1">One of the proteins that surrounds the polypeptide exit tunnel on the outside of the subunit.</text>
</comment>
<comment type="subunit">
    <text evidence="1">Part of the 50S ribosomal subunit.</text>
</comment>
<comment type="similarity">
    <text evidence="1">Belongs to the universal ribosomal protein uL24 family.</text>
</comment>
<evidence type="ECO:0000255" key="1">
    <source>
        <dbReference type="HAMAP-Rule" id="MF_01326"/>
    </source>
</evidence>
<evidence type="ECO:0000305" key="2"/>
<organism>
    <name type="scientific">Bifidobacterium animalis subsp. lactis (strain AD011)</name>
    <dbReference type="NCBI Taxonomy" id="442563"/>
    <lineage>
        <taxon>Bacteria</taxon>
        <taxon>Bacillati</taxon>
        <taxon>Actinomycetota</taxon>
        <taxon>Actinomycetes</taxon>
        <taxon>Bifidobacteriales</taxon>
        <taxon>Bifidobacteriaceae</taxon>
        <taxon>Bifidobacterium</taxon>
    </lineage>
</organism>
<gene>
    <name evidence="1" type="primary">rplX</name>
    <name type="ordered locus">BLA_0373</name>
</gene>
<name>RL24_BIFA0</name>
<keyword id="KW-1185">Reference proteome</keyword>
<keyword id="KW-0687">Ribonucleoprotein</keyword>
<keyword id="KW-0689">Ribosomal protein</keyword>
<keyword id="KW-0694">RNA-binding</keyword>
<keyword id="KW-0699">rRNA-binding</keyword>
<protein>
    <recommendedName>
        <fullName evidence="1">Large ribosomal subunit protein uL24</fullName>
    </recommendedName>
    <alternativeName>
        <fullName evidence="2">50S ribosomal protein L24</fullName>
    </alternativeName>
</protein>